<organism>
    <name type="scientific">Saccharolobus islandicus (strain L.S.2.15 / Lassen #1)</name>
    <name type="common">Sulfolobus islandicus</name>
    <dbReference type="NCBI Taxonomy" id="429572"/>
    <lineage>
        <taxon>Archaea</taxon>
        <taxon>Thermoproteota</taxon>
        <taxon>Thermoprotei</taxon>
        <taxon>Sulfolobales</taxon>
        <taxon>Sulfolobaceae</taxon>
        <taxon>Saccharolobus</taxon>
    </lineage>
</organism>
<protein>
    <recommendedName>
        <fullName evidence="1">Proteasome subunit beta 2</fullName>
        <ecNumber evidence="1">3.4.25.1</ecNumber>
    </recommendedName>
    <alternativeName>
        <fullName evidence="1">20S proteasome beta subunit 2</fullName>
    </alternativeName>
    <alternativeName>
        <fullName evidence="1">Proteasome core protein PsmB 2</fullName>
    </alternativeName>
</protein>
<accession>C3MRE5</accession>
<dbReference type="EC" id="3.4.25.1" evidence="1"/>
<dbReference type="EMBL" id="CP001399">
    <property type="protein sequence ID" value="ACP35958.1"/>
    <property type="molecule type" value="Genomic_DNA"/>
</dbReference>
<dbReference type="SMR" id="C3MRE5"/>
<dbReference type="KEGG" id="sis:LS215_1963"/>
<dbReference type="HOGENOM" id="CLU_035750_7_2_2"/>
<dbReference type="OrthoDB" id="6330at2157"/>
<dbReference type="Proteomes" id="UP000001747">
    <property type="component" value="Chromosome"/>
</dbReference>
<dbReference type="GO" id="GO:0005737">
    <property type="term" value="C:cytoplasm"/>
    <property type="evidence" value="ECO:0007669"/>
    <property type="project" value="UniProtKB-SubCell"/>
</dbReference>
<dbReference type="GO" id="GO:0019774">
    <property type="term" value="C:proteasome core complex, beta-subunit complex"/>
    <property type="evidence" value="ECO:0007669"/>
    <property type="project" value="UniProtKB-UniRule"/>
</dbReference>
<dbReference type="GO" id="GO:0004298">
    <property type="term" value="F:threonine-type endopeptidase activity"/>
    <property type="evidence" value="ECO:0007669"/>
    <property type="project" value="UniProtKB-UniRule"/>
</dbReference>
<dbReference type="GO" id="GO:0010498">
    <property type="term" value="P:proteasomal protein catabolic process"/>
    <property type="evidence" value="ECO:0007669"/>
    <property type="project" value="UniProtKB-UniRule"/>
</dbReference>
<dbReference type="FunFam" id="3.60.20.10:FF:000079">
    <property type="entry name" value="Proteasome subunit beta 2"/>
    <property type="match status" value="1"/>
</dbReference>
<dbReference type="Gene3D" id="3.60.20.10">
    <property type="entry name" value="Glutamine Phosphoribosylpyrophosphate, subunit 1, domain 1"/>
    <property type="match status" value="1"/>
</dbReference>
<dbReference type="HAMAP" id="MF_02113_A">
    <property type="entry name" value="Proteasome_B_A"/>
    <property type="match status" value="1"/>
</dbReference>
<dbReference type="InterPro" id="IPR029055">
    <property type="entry name" value="Ntn_hydrolases_N"/>
</dbReference>
<dbReference type="InterPro" id="IPR019983">
    <property type="entry name" value="Pept_T1A_Psome_bsu_arc"/>
</dbReference>
<dbReference type="InterPro" id="IPR000243">
    <property type="entry name" value="Pept_T1A_subB"/>
</dbReference>
<dbReference type="InterPro" id="IPR016050">
    <property type="entry name" value="Proteasome_bsu_CS"/>
</dbReference>
<dbReference type="InterPro" id="IPR001353">
    <property type="entry name" value="Proteasome_sua/b"/>
</dbReference>
<dbReference type="InterPro" id="IPR023333">
    <property type="entry name" value="Proteasome_suB-type"/>
</dbReference>
<dbReference type="NCBIfam" id="TIGR03634">
    <property type="entry name" value="arc_protsome_B"/>
    <property type="match status" value="1"/>
</dbReference>
<dbReference type="PANTHER" id="PTHR32194:SF0">
    <property type="entry name" value="ATP-DEPENDENT PROTEASE SUBUNIT HSLV"/>
    <property type="match status" value="1"/>
</dbReference>
<dbReference type="PANTHER" id="PTHR32194">
    <property type="entry name" value="METALLOPROTEASE TLDD"/>
    <property type="match status" value="1"/>
</dbReference>
<dbReference type="Pfam" id="PF00227">
    <property type="entry name" value="Proteasome"/>
    <property type="match status" value="1"/>
</dbReference>
<dbReference type="PRINTS" id="PR00141">
    <property type="entry name" value="PROTEASOME"/>
</dbReference>
<dbReference type="SUPFAM" id="SSF56235">
    <property type="entry name" value="N-terminal nucleophile aminohydrolases (Ntn hydrolases)"/>
    <property type="match status" value="1"/>
</dbReference>
<dbReference type="PROSITE" id="PS00854">
    <property type="entry name" value="PROTEASOME_BETA_1"/>
    <property type="match status" value="1"/>
</dbReference>
<dbReference type="PROSITE" id="PS51476">
    <property type="entry name" value="PROTEASOME_BETA_2"/>
    <property type="match status" value="1"/>
</dbReference>
<proteinExistence type="inferred from homology"/>
<name>PSB2_SACI2</name>
<reference key="1">
    <citation type="journal article" date="2009" name="Proc. Natl. Acad. Sci. U.S.A.">
        <title>Biogeography of the Sulfolobus islandicus pan-genome.</title>
        <authorList>
            <person name="Reno M.L."/>
            <person name="Held N.L."/>
            <person name="Fields C.J."/>
            <person name="Burke P.V."/>
            <person name="Whitaker R.J."/>
        </authorList>
    </citation>
    <scope>NUCLEOTIDE SEQUENCE [LARGE SCALE GENOMIC DNA]</scope>
    <source>
        <strain>L.S.2.15 / Lassen #1</strain>
    </source>
</reference>
<feature type="propeptide" id="PRO_0000397432" description="Removed in mature form; by autocatalysis" evidence="1">
    <location>
        <begin position="1"/>
        <end position="6"/>
    </location>
</feature>
<feature type="chain" id="PRO_0000397433" description="Proteasome subunit beta 2">
    <location>
        <begin position="7"/>
        <end position="196"/>
    </location>
</feature>
<feature type="active site" description="Nucleophile" evidence="1">
    <location>
        <position position="7"/>
    </location>
</feature>
<keyword id="KW-0068">Autocatalytic cleavage</keyword>
<keyword id="KW-0963">Cytoplasm</keyword>
<keyword id="KW-0378">Hydrolase</keyword>
<keyword id="KW-0645">Protease</keyword>
<keyword id="KW-0647">Proteasome</keyword>
<keyword id="KW-0888">Threonine protease</keyword>
<keyword id="KW-0865">Zymogen</keyword>
<gene>
    <name evidence="1" type="primary">psmB2</name>
    <name type="ordered locus">LS215_1963</name>
</gene>
<evidence type="ECO:0000255" key="1">
    <source>
        <dbReference type="HAMAP-Rule" id="MF_02113"/>
    </source>
</evidence>
<sequence length="196" mass="21350">MEELPATAIGLKVNDGIVLASERRLSYGGYVLSKQAKKVHKIGKFLMAGAGIYGDLQTLTRIMNVEIKYYEISTGKPISVHAAAKLLSVILYQYKVMPFISEILFGGVDEKGPQLYVLDPIGSLIEDNYAAVGSGARIAIGVLESEYDPNMNLDIAAQLITKAIKASIERDITSGDGIDLAIMDKKGNYENKFIPY</sequence>
<comment type="function">
    <text evidence="1">Component of the proteasome core, a large protease complex with broad specificity involved in protein degradation.</text>
</comment>
<comment type="catalytic activity">
    <reaction evidence="1">
        <text>Cleavage of peptide bonds with very broad specificity.</text>
        <dbReference type="EC" id="3.4.25.1"/>
    </reaction>
</comment>
<comment type="activity regulation">
    <text evidence="1">The formation of the proteasomal ATPase PAN-20S proteasome complex, via the docking of the C-termini of PAN into the intersubunit pockets in the alpha-rings, triggers opening of the gate for substrate entry. Interconversion between the open-gate and close-gate conformations leads to a dynamic regulation of the 20S proteasome proteolysis activity.</text>
</comment>
<comment type="subunit">
    <text evidence="1">The 20S proteasome core is composed of 14 alpha and 14 beta subunits that assemble into four stacked heptameric rings, resulting in a barrel-shaped structure. The two inner rings, each composed of seven catalytic beta subunits, are sandwiched by two outer rings, each composed of seven alpha subunits. The catalytic chamber with the active sites is on the inside of the barrel. Has a gated structure, the ends of the cylinder being occluded by the N-termini of the alpha-subunits. Is capped at one or both ends by the proteasome regulatory ATPase, PAN.</text>
</comment>
<comment type="subcellular location">
    <subcellularLocation>
        <location evidence="1">Cytoplasm</location>
    </subcellularLocation>
</comment>
<comment type="similarity">
    <text evidence="1">Belongs to the peptidase T1B family.</text>
</comment>